<comment type="similarity">
    <text evidence="2">Belongs to the archaeal adenylate kinase family.</text>
</comment>
<name>KADL_METTH</name>
<proteinExistence type="inferred from homology"/>
<feature type="chain" id="PRO_0000131830" description="Adenylate kinase homolog MTH_1663">
    <location>
        <begin position="1"/>
        <end position="189"/>
    </location>
</feature>
<feature type="binding site" evidence="1">
    <location>
        <begin position="12"/>
        <end position="20"/>
    </location>
    <ligand>
        <name>ATP</name>
        <dbReference type="ChEBI" id="CHEBI:30616"/>
    </ligand>
</feature>
<evidence type="ECO:0000255" key="1"/>
<evidence type="ECO:0000305" key="2"/>
<reference key="1">
    <citation type="journal article" date="1997" name="J. Bacteriol.">
        <title>Complete genome sequence of Methanobacterium thermoautotrophicum deltaH: functional analysis and comparative genomics.</title>
        <authorList>
            <person name="Smith D.R."/>
            <person name="Doucette-Stamm L.A."/>
            <person name="Deloughery C."/>
            <person name="Lee H.-M."/>
            <person name="Dubois J."/>
            <person name="Aldredge T."/>
            <person name="Bashirzadeh R."/>
            <person name="Blakely D."/>
            <person name="Cook R."/>
            <person name="Gilbert K."/>
            <person name="Harrison D."/>
            <person name="Hoang L."/>
            <person name="Keagle P."/>
            <person name="Lumm W."/>
            <person name="Pothier B."/>
            <person name="Qiu D."/>
            <person name="Spadafora R."/>
            <person name="Vicare R."/>
            <person name="Wang Y."/>
            <person name="Wierzbowski J."/>
            <person name="Gibson R."/>
            <person name="Jiwani N."/>
            <person name="Caruso A."/>
            <person name="Bush D."/>
            <person name="Safer H."/>
            <person name="Patwell D."/>
            <person name="Prabhakar S."/>
            <person name="McDougall S."/>
            <person name="Shimer G."/>
            <person name="Goyal A."/>
            <person name="Pietrovski S."/>
            <person name="Church G.M."/>
            <person name="Daniels C.J."/>
            <person name="Mao J.-I."/>
            <person name="Rice P."/>
            <person name="Noelling J."/>
            <person name="Reeve J.N."/>
        </authorList>
    </citation>
    <scope>NUCLEOTIDE SEQUENCE [LARGE SCALE GENOMIC DNA]</scope>
    <source>
        <strain>ATCC 29096 / DSM 1053 / JCM 10044 / NBRC 100330 / Delta H</strain>
    </source>
</reference>
<accession>O27699</accession>
<keyword id="KW-0067">ATP-binding</keyword>
<keyword id="KW-0418">Kinase</keyword>
<keyword id="KW-0547">Nucleotide-binding</keyword>
<keyword id="KW-1185">Reference proteome</keyword>
<keyword id="KW-0808">Transferase</keyword>
<protein>
    <recommendedName>
        <fullName>Adenylate kinase homolog MTH_1663</fullName>
    </recommendedName>
</protein>
<organism>
    <name type="scientific">Methanothermobacter thermautotrophicus (strain ATCC 29096 / DSM 1053 / JCM 10044 / NBRC 100330 / Delta H)</name>
    <name type="common">Methanobacterium thermoautotrophicum</name>
    <dbReference type="NCBI Taxonomy" id="187420"/>
    <lineage>
        <taxon>Archaea</taxon>
        <taxon>Methanobacteriati</taxon>
        <taxon>Methanobacteriota</taxon>
        <taxon>Methanomada group</taxon>
        <taxon>Methanobacteria</taxon>
        <taxon>Methanobacteriales</taxon>
        <taxon>Methanobacteriaceae</taxon>
        <taxon>Methanothermobacter</taxon>
    </lineage>
</organism>
<gene>
    <name type="ordered locus">MTH_1663</name>
</gene>
<dbReference type="EMBL" id="AE000666">
    <property type="protein sequence ID" value="AAB86135.1"/>
    <property type="molecule type" value="Genomic_DNA"/>
</dbReference>
<dbReference type="PIR" id="C69089">
    <property type="entry name" value="C69089"/>
</dbReference>
<dbReference type="RefSeq" id="WP_010877270.1">
    <property type="nucleotide sequence ID" value="NC_000916.1"/>
</dbReference>
<dbReference type="SMR" id="O27699"/>
<dbReference type="STRING" id="187420.MTH_1663"/>
<dbReference type="PaxDb" id="187420-MTH_1663"/>
<dbReference type="EnsemblBacteria" id="AAB86135">
    <property type="protein sequence ID" value="AAB86135"/>
    <property type="gene ID" value="MTH_1663"/>
</dbReference>
<dbReference type="GeneID" id="1470748"/>
<dbReference type="KEGG" id="mth:MTH_1663"/>
<dbReference type="HOGENOM" id="CLU_119371_0_0_2"/>
<dbReference type="InParanoid" id="O27699"/>
<dbReference type="Proteomes" id="UP000005223">
    <property type="component" value="Chromosome"/>
</dbReference>
<dbReference type="GO" id="GO:0005524">
    <property type="term" value="F:ATP binding"/>
    <property type="evidence" value="ECO:0007669"/>
    <property type="project" value="UniProtKB-KW"/>
</dbReference>
<dbReference type="GO" id="GO:0016301">
    <property type="term" value="F:kinase activity"/>
    <property type="evidence" value="ECO:0007669"/>
    <property type="project" value="UniProtKB-KW"/>
</dbReference>
<dbReference type="Gene3D" id="3.40.50.300">
    <property type="entry name" value="P-loop containing nucleotide triphosphate hydrolases"/>
    <property type="match status" value="1"/>
</dbReference>
<dbReference type="InterPro" id="IPR027417">
    <property type="entry name" value="P-loop_NTPase"/>
</dbReference>
<dbReference type="NCBIfam" id="NF003122">
    <property type="entry name" value="PRK04040.1"/>
    <property type="match status" value="1"/>
</dbReference>
<dbReference type="Pfam" id="PF13207">
    <property type="entry name" value="AAA_17"/>
    <property type="match status" value="1"/>
</dbReference>
<dbReference type="SUPFAM" id="SSF52540">
    <property type="entry name" value="P-loop containing nucleoside triphosphate hydrolases"/>
    <property type="match status" value="1"/>
</dbReference>
<sequence length="189" mass="21218">MKGVPRTVAVVGVPGTGKTTVCRILSGMVRHTYINYGELMLRVAGEWNLAETLEDLFKLPMDQQHLIWLEAAHRIRRLDYVLMDLHGLDRSPLGYLISLPVDIISPDIIVILESDPQSILWRRMADSKMRVRESLESLREHMEMLRTSMFVCSAVLGSVVSIVENHDPEEAALDILGIIEAAWAGDTTP</sequence>